<reference key="1">
    <citation type="submission" date="2006-12" db="EMBL/GenBank/DDBJ databases">
        <title>Complete sequence of chromosome 1 of Paracoccus denitrificans PD1222.</title>
        <authorList>
            <person name="Copeland A."/>
            <person name="Lucas S."/>
            <person name="Lapidus A."/>
            <person name="Barry K."/>
            <person name="Detter J.C."/>
            <person name="Glavina del Rio T."/>
            <person name="Hammon N."/>
            <person name="Israni S."/>
            <person name="Dalin E."/>
            <person name="Tice H."/>
            <person name="Pitluck S."/>
            <person name="Munk A.C."/>
            <person name="Brettin T."/>
            <person name="Bruce D."/>
            <person name="Han C."/>
            <person name="Tapia R."/>
            <person name="Gilna P."/>
            <person name="Schmutz J."/>
            <person name="Larimer F."/>
            <person name="Land M."/>
            <person name="Hauser L."/>
            <person name="Kyrpides N."/>
            <person name="Lykidis A."/>
            <person name="Spiro S."/>
            <person name="Richardson D.J."/>
            <person name="Moir J.W.B."/>
            <person name="Ferguson S.J."/>
            <person name="van Spanning R.J.M."/>
            <person name="Richardson P."/>
        </authorList>
    </citation>
    <scope>NUCLEOTIDE SEQUENCE [LARGE SCALE GENOMIC DNA]</scope>
    <source>
        <strain>Pd 1222</strain>
    </source>
</reference>
<feature type="chain" id="PRO_1000062490" description="Protein-export protein SecB">
    <location>
        <begin position="1"/>
        <end position="177"/>
    </location>
</feature>
<feature type="region of interest" description="Disordered" evidence="2">
    <location>
        <begin position="1"/>
        <end position="22"/>
    </location>
</feature>
<feature type="compositionally biased region" description="Low complexity" evidence="2">
    <location>
        <begin position="8"/>
        <end position="22"/>
    </location>
</feature>
<dbReference type="EMBL" id="CP000489">
    <property type="protein sequence ID" value="ABL70868.1"/>
    <property type="molecule type" value="Genomic_DNA"/>
</dbReference>
<dbReference type="RefSeq" id="WP_011749059.1">
    <property type="nucleotide sequence ID" value="NC_008686.1"/>
</dbReference>
<dbReference type="SMR" id="A1B5S4"/>
<dbReference type="STRING" id="318586.Pden_2784"/>
<dbReference type="EnsemblBacteria" id="ABL70868">
    <property type="protein sequence ID" value="ABL70868"/>
    <property type="gene ID" value="Pden_2784"/>
</dbReference>
<dbReference type="GeneID" id="93451182"/>
<dbReference type="KEGG" id="pde:Pden_2784"/>
<dbReference type="eggNOG" id="COG1952">
    <property type="taxonomic scope" value="Bacteria"/>
</dbReference>
<dbReference type="HOGENOM" id="CLU_111574_0_0_5"/>
<dbReference type="OrthoDB" id="9795145at2"/>
<dbReference type="Proteomes" id="UP000000361">
    <property type="component" value="Chromosome 1"/>
</dbReference>
<dbReference type="GO" id="GO:0005737">
    <property type="term" value="C:cytoplasm"/>
    <property type="evidence" value="ECO:0007669"/>
    <property type="project" value="UniProtKB-SubCell"/>
</dbReference>
<dbReference type="GO" id="GO:0051082">
    <property type="term" value="F:unfolded protein binding"/>
    <property type="evidence" value="ECO:0007669"/>
    <property type="project" value="InterPro"/>
</dbReference>
<dbReference type="GO" id="GO:0006457">
    <property type="term" value="P:protein folding"/>
    <property type="evidence" value="ECO:0007669"/>
    <property type="project" value="UniProtKB-UniRule"/>
</dbReference>
<dbReference type="GO" id="GO:0051262">
    <property type="term" value="P:protein tetramerization"/>
    <property type="evidence" value="ECO:0007669"/>
    <property type="project" value="InterPro"/>
</dbReference>
<dbReference type="GO" id="GO:0015031">
    <property type="term" value="P:protein transport"/>
    <property type="evidence" value="ECO:0007669"/>
    <property type="project" value="UniProtKB-UniRule"/>
</dbReference>
<dbReference type="Gene3D" id="3.10.420.10">
    <property type="entry name" value="SecB-like"/>
    <property type="match status" value="1"/>
</dbReference>
<dbReference type="HAMAP" id="MF_00821">
    <property type="entry name" value="SecB"/>
    <property type="match status" value="1"/>
</dbReference>
<dbReference type="InterPro" id="IPR003708">
    <property type="entry name" value="SecB"/>
</dbReference>
<dbReference type="InterPro" id="IPR035958">
    <property type="entry name" value="SecB-like_sf"/>
</dbReference>
<dbReference type="NCBIfam" id="NF004392">
    <property type="entry name" value="PRK05751.1-3"/>
    <property type="match status" value="1"/>
</dbReference>
<dbReference type="NCBIfam" id="TIGR00809">
    <property type="entry name" value="secB"/>
    <property type="match status" value="1"/>
</dbReference>
<dbReference type="PANTHER" id="PTHR36918">
    <property type="match status" value="1"/>
</dbReference>
<dbReference type="PANTHER" id="PTHR36918:SF1">
    <property type="entry name" value="PROTEIN-EXPORT PROTEIN SECB"/>
    <property type="match status" value="1"/>
</dbReference>
<dbReference type="Pfam" id="PF02556">
    <property type="entry name" value="SecB"/>
    <property type="match status" value="1"/>
</dbReference>
<dbReference type="PRINTS" id="PR01594">
    <property type="entry name" value="SECBCHAPRONE"/>
</dbReference>
<dbReference type="SUPFAM" id="SSF54611">
    <property type="entry name" value="SecB-like"/>
    <property type="match status" value="1"/>
</dbReference>
<gene>
    <name evidence="1" type="primary">secB</name>
    <name type="ordered locus">Pden_2784</name>
</gene>
<sequence>MSDENNSGAAAPEAQNPGQNAAQPAVRLQILTQYIRDLSFENAVAQKGLPSGEVQPEISVQVSLDARKRPAEHQYEVISKFRVQSSNATDKSPLFLCELDYGGIFHVEGVPEDQLHPFLMIECPRMMFPFVRRIVSDMTRDGGFPPFNMDPVDFVALYRQEIARRTQAQRPADQPLS</sequence>
<keyword id="KW-0143">Chaperone</keyword>
<keyword id="KW-0963">Cytoplasm</keyword>
<keyword id="KW-0653">Protein transport</keyword>
<keyword id="KW-1185">Reference proteome</keyword>
<keyword id="KW-0811">Translocation</keyword>
<keyword id="KW-0813">Transport</keyword>
<organism>
    <name type="scientific">Paracoccus denitrificans (strain Pd 1222)</name>
    <dbReference type="NCBI Taxonomy" id="318586"/>
    <lineage>
        <taxon>Bacteria</taxon>
        <taxon>Pseudomonadati</taxon>
        <taxon>Pseudomonadota</taxon>
        <taxon>Alphaproteobacteria</taxon>
        <taxon>Rhodobacterales</taxon>
        <taxon>Paracoccaceae</taxon>
        <taxon>Paracoccus</taxon>
    </lineage>
</organism>
<proteinExistence type="inferred from homology"/>
<accession>A1B5S4</accession>
<comment type="function">
    <text evidence="1">One of the proteins required for the normal export of preproteins out of the cell cytoplasm. It is a molecular chaperone that binds to a subset of precursor proteins, maintaining them in a translocation-competent state. It also specifically binds to its receptor SecA.</text>
</comment>
<comment type="subunit">
    <text evidence="1">Homotetramer, a dimer of dimers. One homotetramer interacts with 1 SecA dimer.</text>
</comment>
<comment type="subcellular location">
    <subcellularLocation>
        <location evidence="1">Cytoplasm</location>
    </subcellularLocation>
</comment>
<comment type="similarity">
    <text evidence="1">Belongs to the SecB family.</text>
</comment>
<evidence type="ECO:0000255" key="1">
    <source>
        <dbReference type="HAMAP-Rule" id="MF_00821"/>
    </source>
</evidence>
<evidence type="ECO:0000256" key="2">
    <source>
        <dbReference type="SAM" id="MobiDB-lite"/>
    </source>
</evidence>
<protein>
    <recommendedName>
        <fullName evidence="1">Protein-export protein SecB</fullName>
    </recommendedName>
</protein>
<name>SECB_PARDP</name>